<sequence length="367" mass="39600">MKKQRIVVKIGSSSLADSHEGISKEQLSDHVAALARLKEEGHEVLLITSGAVAAGFSALGYPSRPVTIKGKQAAAAVGQSLLMQAYTEEFRKYGIVTAQLLLTRSDFSRKEQYSNAYATLGELLNRSALPIINENDSISLEELTFGDNDMLSALVSGLVSADMLMIFTDVNGLYDKNPQKNEDAKKYYFLPEVTEEIASLAGDAGSKLGTGGMKSKVDAAKTALSLGVSVFIGTGRGQEKFVDVLKGKGDGTYVGNAPQKEMKINKQWIALHSVVSGQIEIDAGAATAIIQHGKSLLPAGVTNVSGFFQVGEVVEVMTQQGRVIGKGQCTYSAEELRDVKGMQSQQIQARGERHNYEVIHRDYWVSF</sequence>
<keyword id="KW-0028">Amino-acid biosynthesis</keyword>
<keyword id="KW-0067">ATP-binding</keyword>
<keyword id="KW-0963">Cytoplasm</keyword>
<keyword id="KW-0418">Kinase</keyword>
<keyword id="KW-0547">Nucleotide-binding</keyword>
<keyword id="KW-0641">Proline biosynthesis</keyword>
<keyword id="KW-1185">Reference proteome</keyword>
<keyword id="KW-0808">Transferase</keyword>
<evidence type="ECO:0000255" key="1">
    <source>
        <dbReference type="HAMAP-Rule" id="MF_00456"/>
    </source>
</evidence>
<evidence type="ECO:0000305" key="2"/>
<organism>
    <name type="scientific">Bacillus anthracis</name>
    <dbReference type="NCBI Taxonomy" id="1392"/>
    <lineage>
        <taxon>Bacteria</taxon>
        <taxon>Bacillati</taxon>
        <taxon>Bacillota</taxon>
        <taxon>Bacilli</taxon>
        <taxon>Bacillales</taxon>
        <taxon>Bacillaceae</taxon>
        <taxon>Bacillus</taxon>
        <taxon>Bacillus cereus group</taxon>
    </lineage>
</organism>
<reference key="1">
    <citation type="journal article" date="2003" name="Nature">
        <title>The genome sequence of Bacillus anthracis Ames and comparison to closely related bacteria.</title>
        <authorList>
            <person name="Read T.D."/>
            <person name="Peterson S.N."/>
            <person name="Tourasse N.J."/>
            <person name="Baillie L.W."/>
            <person name="Paulsen I.T."/>
            <person name="Nelson K.E."/>
            <person name="Tettelin H."/>
            <person name="Fouts D.E."/>
            <person name="Eisen J.A."/>
            <person name="Gill S.R."/>
            <person name="Holtzapple E.K."/>
            <person name="Okstad O.A."/>
            <person name="Helgason E."/>
            <person name="Rilstone J."/>
            <person name="Wu M."/>
            <person name="Kolonay J.F."/>
            <person name="Beanan M.J."/>
            <person name="Dodson R.J."/>
            <person name="Brinkac L.M."/>
            <person name="Gwinn M.L."/>
            <person name="DeBoy R.T."/>
            <person name="Madpu R."/>
            <person name="Daugherty S.C."/>
            <person name="Durkin A.S."/>
            <person name="Haft D.H."/>
            <person name="Nelson W.C."/>
            <person name="Peterson J.D."/>
            <person name="Pop M."/>
            <person name="Khouri H.M."/>
            <person name="Radune D."/>
            <person name="Benton J.L."/>
            <person name="Mahamoud Y."/>
            <person name="Jiang L."/>
            <person name="Hance I.R."/>
            <person name="Weidman J.F."/>
            <person name="Berry K.J."/>
            <person name="Plaut R.D."/>
            <person name="Wolf A.M."/>
            <person name="Watkins K.L."/>
            <person name="Nierman W.C."/>
            <person name="Hazen A."/>
            <person name="Cline R.T."/>
            <person name="Redmond C."/>
            <person name="Thwaite J.E."/>
            <person name="White O."/>
            <person name="Salzberg S.L."/>
            <person name="Thomason B."/>
            <person name="Friedlander A.M."/>
            <person name="Koehler T.M."/>
            <person name="Hanna P.C."/>
            <person name="Kolstoe A.-B."/>
            <person name="Fraser C.M."/>
        </authorList>
    </citation>
    <scope>NUCLEOTIDE SEQUENCE [LARGE SCALE GENOMIC DNA]</scope>
    <source>
        <strain>Ames / isolate Porton</strain>
    </source>
</reference>
<reference key="2">
    <citation type="journal article" date="2009" name="J. Bacteriol.">
        <title>The complete genome sequence of Bacillus anthracis Ames 'Ancestor'.</title>
        <authorList>
            <person name="Ravel J."/>
            <person name="Jiang L."/>
            <person name="Stanley S.T."/>
            <person name="Wilson M.R."/>
            <person name="Decker R.S."/>
            <person name="Read T.D."/>
            <person name="Worsham P."/>
            <person name="Keim P.S."/>
            <person name="Salzberg S.L."/>
            <person name="Fraser-Liggett C.M."/>
            <person name="Rasko D.A."/>
        </authorList>
    </citation>
    <scope>NUCLEOTIDE SEQUENCE [LARGE SCALE GENOMIC DNA]</scope>
    <source>
        <strain>Ames ancestor</strain>
    </source>
</reference>
<reference key="3">
    <citation type="submission" date="2004-01" db="EMBL/GenBank/DDBJ databases">
        <title>Complete genome sequence of Bacillus anthracis Sterne.</title>
        <authorList>
            <person name="Brettin T.S."/>
            <person name="Bruce D."/>
            <person name="Challacombe J.F."/>
            <person name="Gilna P."/>
            <person name="Han C."/>
            <person name="Hill K."/>
            <person name="Hitchcock P."/>
            <person name="Jackson P."/>
            <person name="Keim P."/>
            <person name="Longmire J."/>
            <person name="Lucas S."/>
            <person name="Okinaka R."/>
            <person name="Richardson P."/>
            <person name="Rubin E."/>
            <person name="Tice H."/>
        </authorList>
    </citation>
    <scope>NUCLEOTIDE SEQUENCE [LARGE SCALE GENOMIC DNA]</scope>
    <source>
        <strain>Sterne</strain>
    </source>
</reference>
<accession>Q81P26</accession>
<accession>Q6HX98</accession>
<accession>Q6KRC0</accession>
<comment type="function">
    <text evidence="1">Catalyzes the transfer of a phosphate group to glutamate to form L-glutamate 5-phosphate.</text>
</comment>
<comment type="catalytic activity">
    <reaction evidence="1">
        <text>L-glutamate + ATP = L-glutamyl 5-phosphate + ADP</text>
        <dbReference type="Rhea" id="RHEA:14877"/>
        <dbReference type="ChEBI" id="CHEBI:29985"/>
        <dbReference type="ChEBI" id="CHEBI:30616"/>
        <dbReference type="ChEBI" id="CHEBI:58274"/>
        <dbReference type="ChEBI" id="CHEBI:456216"/>
        <dbReference type="EC" id="2.7.2.11"/>
    </reaction>
</comment>
<comment type="pathway">
    <text evidence="1">Amino-acid biosynthesis; L-proline biosynthesis; L-glutamate 5-semialdehyde from L-glutamate: step 1/2.</text>
</comment>
<comment type="subcellular location">
    <subcellularLocation>
        <location evidence="1">Cytoplasm</location>
    </subcellularLocation>
</comment>
<comment type="similarity">
    <text evidence="1">Belongs to the glutamate 5-kinase family.</text>
</comment>
<comment type="sequence caution" evidence="2">
    <conflict type="erroneous initiation">
        <sequence resource="EMBL-CDS" id="AAT55091"/>
    </conflict>
</comment>
<name>PROB_BACAN</name>
<feature type="chain" id="PRO_0000109632" description="Glutamate 5-kinase">
    <location>
        <begin position="1"/>
        <end position="367"/>
    </location>
</feature>
<feature type="domain" description="PUA" evidence="1">
    <location>
        <begin position="276"/>
        <end position="350"/>
    </location>
</feature>
<feature type="binding site" evidence="1">
    <location>
        <position position="9"/>
    </location>
    <ligand>
        <name>ATP</name>
        <dbReference type="ChEBI" id="CHEBI:30616"/>
    </ligand>
</feature>
<feature type="binding site" evidence="1">
    <location>
        <position position="49"/>
    </location>
    <ligand>
        <name>substrate</name>
    </ligand>
</feature>
<feature type="binding site" evidence="1">
    <location>
        <position position="136"/>
    </location>
    <ligand>
        <name>substrate</name>
    </ligand>
</feature>
<feature type="binding site" evidence="1">
    <location>
        <position position="148"/>
    </location>
    <ligand>
        <name>substrate</name>
    </ligand>
</feature>
<feature type="binding site" evidence="1">
    <location>
        <begin position="168"/>
        <end position="169"/>
    </location>
    <ligand>
        <name>ATP</name>
        <dbReference type="ChEBI" id="CHEBI:30616"/>
    </ligand>
</feature>
<feature type="binding site" evidence="1">
    <location>
        <begin position="210"/>
        <end position="216"/>
    </location>
    <ligand>
        <name>ATP</name>
        <dbReference type="ChEBI" id="CHEBI:30616"/>
    </ligand>
</feature>
<dbReference type="EC" id="2.7.2.11" evidence="1"/>
<dbReference type="EMBL" id="AE016879">
    <property type="protein sequence ID" value="AAP26812.1"/>
    <property type="molecule type" value="Genomic_DNA"/>
</dbReference>
<dbReference type="EMBL" id="AE017334">
    <property type="protein sequence ID" value="AAT32111.2"/>
    <property type="molecule type" value="Genomic_DNA"/>
</dbReference>
<dbReference type="EMBL" id="AE017225">
    <property type="protein sequence ID" value="AAT55091.1"/>
    <property type="status" value="ALT_INIT"/>
    <property type="molecule type" value="Genomic_DNA"/>
</dbReference>
<dbReference type="RefSeq" id="NP_845326.1">
    <property type="nucleotide sequence ID" value="NC_003997.3"/>
</dbReference>
<dbReference type="RefSeq" id="WP_000744711.1">
    <property type="nucleotide sequence ID" value="NZ_WXXJ01000029.1"/>
</dbReference>
<dbReference type="SMR" id="Q81P26"/>
<dbReference type="IntAct" id="Q81P26">
    <property type="interactions" value="3"/>
</dbReference>
<dbReference type="STRING" id="261594.GBAA_2993"/>
<dbReference type="DNASU" id="1086339"/>
<dbReference type="GeneID" id="45022806"/>
<dbReference type="KEGG" id="ban:BA_2993"/>
<dbReference type="KEGG" id="banh:HYU01_14800"/>
<dbReference type="KEGG" id="bar:GBAA_2993"/>
<dbReference type="KEGG" id="bat:BAS2782"/>
<dbReference type="PATRIC" id="fig|198094.11.peg.2974"/>
<dbReference type="eggNOG" id="COG0263">
    <property type="taxonomic scope" value="Bacteria"/>
</dbReference>
<dbReference type="HOGENOM" id="CLU_025400_2_0_9"/>
<dbReference type="OrthoDB" id="9804434at2"/>
<dbReference type="UniPathway" id="UPA00098">
    <property type="reaction ID" value="UER00359"/>
</dbReference>
<dbReference type="Proteomes" id="UP000000427">
    <property type="component" value="Chromosome"/>
</dbReference>
<dbReference type="Proteomes" id="UP000000594">
    <property type="component" value="Chromosome"/>
</dbReference>
<dbReference type="GO" id="GO:0005829">
    <property type="term" value="C:cytosol"/>
    <property type="evidence" value="ECO:0007669"/>
    <property type="project" value="TreeGrafter"/>
</dbReference>
<dbReference type="GO" id="GO:0005524">
    <property type="term" value="F:ATP binding"/>
    <property type="evidence" value="ECO:0007669"/>
    <property type="project" value="UniProtKB-KW"/>
</dbReference>
<dbReference type="GO" id="GO:0004349">
    <property type="term" value="F:glutamate 5-kinase activity"/>
    <property type="evidence" value="ECO:0007669"/>
    <property type="project" value="UniProtKB-UniRule"/>
</dbReference>
<dbReference type="GO" id="GO:0003723">
    <property type="term" value="F:RNA binding"/>
    <property type="evidence" value="ECO:0007669"/>
    <property type="project" value="InterPro"/>
</dbReference>
<dbReference type="GO" id="GO:0055129">
    <property type="term" value="P:L-proline biosynthetic process"/>
    <property type="evidence" value="ECO:0007669"/>
    <property type="project" value="UniProtKB-UniRule"/>
</dbReference>
<dbReference type="CDD" id="cd04242">
    <property type="entry name" value="AAK_G5K_ProB"/>
    <property type="match status" value="1"/>
</dbReference>
<dbReference type="CDD" id="cd21157">
    <property type="entry name" value="PUA_G5K"/>
    <property type="match status" value="1"/>
</dbReference>
<dbReference type="FunFam" id="2.30.130.10:FF:000007">
    <property type="entry name" value="Glutamate 5-kinase"/>
    <property type="match status" value="1"/>
</dbReference>
<dbReference type="FunFam" id="3.40.1160.10:FF:000018">
    <property type="entry name" value="Glutamate 5-kinase"/>
    <property type="match status" value="1"/>
</dbReference>
<dbReference type="Gene3D" id="3.40.1160.10">
    <property type="entry name" value="Acetylglutamate kinase-like"/>
    <property type="match status" value="1"/>
</dbReference>
<dbReference type="Gene3D" id="2.30.130.10">
    <property type="entry name" value="PUA domain"/>
    <property type="match status" value="1"/>
</dbReference>
<dbReference type="HAMAP" id="MF_00456">
    <property type="entry name" value="ProB"/>
    <property type="match status" value="1"/>
</dbReference>
<dbReference type="InterPro" id="IPR036393">
    <property type="entry name" value="AceGlu_kinase-like_sf"/>
</dbReference>
<dbReference type="InterPro" id="IPR001048">
    <property type="entry name" value="Asp/Glu/Uridylate_kinase"/>
</dbReference>
<dbReference type="InterPro" id="IPR041739">
    <property type="entry name" value="G5K_ProB"/>
</dbReference>
<dbReference type="InterPro" id="IPR001057">
    <property type="entry name" value="Glu/AcGlu_kinase"/>
</dbReference>
<dbReference type="InterPro" id="IPR011529">
    <property type="entry name" value="Glu_5kinase"/>
</dbReference>
<dbReference type="InterPro" id="IPR005715">
    <property type="entry name" value="Glu_5kinase/COase_Synthase"/>
</dbReference>
<dbReference type="InterPro" id="IPR019797">
    <property type="entry name" value="Glutamate_5-kinase_CS"/>
</dbReference>
<dbReference type="InterPro" id="IPR002478">
    <property type="entry name" value="PUA"/>
</dbReference>
<dbReference type="InterPro" id="IPR015947">
    <property type="entry name" value="PUA-like_sf"/>
</dbReference>
<dbReference type="InterPro" id="IPR036974">
    <property type="entry name" value="PUA_sf"/>
</dbReference>
<dbReference type="NCBIfam" id="TIGR01027">
    <property type="entry name" value="proB"/>
    <property type="match status" value="1"/>
</dbReference>
<dbReference type="PANTHER" id="PTHR43654">
    <property type="entry name" value="GLUTAMATE 5-KINASE"/>
    <property type="match status" value="1"/>
</dbReference>
<dbReference type="PANTHER" id="PTHR43654:SF1">
    <property type="entry name" value="ISOPENTENYL PHOSPHATE KINASE"/>
    <property type="match status" value="1"/>
</dbReference>
<dbReference type="Pfam" id="PF00696">
    <property type="entry name" value="AA_kinase"/>
    <property type="match status" value="1"/>
</dbReference>
<dbReference type="Pfam" id="PF01472">
    <property type="entry name" value="PUA"/>
    <property type="match status" value="1"/>
</dbReference>
<dbReference type="PIRSF" id="PIRSF000729">
    <property type="entry name" value="GK"/>
    <property type="match status" value="1"/>
</dbReference>
<dbReference type="PRINTS" id="PR00474">
    <property type="entry name" value="GLU5KINASE"/>
</dbReference>
<dbReference type="SMART" id="SM00359">
    <property type="entry name" value="PUA"/>
    <property type="match status" value="1"/>
</dbReference>
<dbReference type="SUPFAM" id="SSF53633">
    <property type="entry name" value="Carbamate kinase-like"/>
    <property type="match status" value="1"/>
</dbReference>
<dbReference type="SUPFAM" id="SSF88697">
    <property type="entry name" value="PUA domain-like"/>
    <property type="match status" value="1"/>
</dbReference>
<dbReference type="PROSITE" id="PS00902">
    <property type="entry name" value="GLUTAMATE_5_KINASE"/>
    <property type="match status" value="1"/>
</dbReference>
<dbReference type="PROSITE" id="PS50890">
    <property type="entry name" value="PUA"/>
    <property type="match status" value="1"/>
</dbReference>
<gene>
    <name evidence="1" type="primary">proB</name>
    <name type="ordered locus">BA_2993</name>
    <name type="ordered locus">GBAA_2993</name>
    <name type="ordered locus">BAS2782</name>
</gene>
<proteinExistence type="inferred from homology"/>
<protein>
    <recommendedName>
        <fullName evidence="1">Glutamate 5-kinase</fullName>
        <ecNumber evidence="1">2.7.2.11</ecNumber>
    </recommendedName>
    <alternativeName>
        <fullName evidence="1">Gamma-glutamyl kinase</fullName>
        <shortName evidence="1">GK</shortName>
    </alternativeName>
</protein>